<proteinExistence type="inferred from homology"/>
<comment type="function">
    <text evidence="1">Transfers the 4'-phosphopantetheine moiety from coenzyme A to a Ser of acyl-carrier-protein.</text>
</comment>
<comment type="catalytic activity">
    <reaction evidence="1">
        <text>apo-[ACP] + CoA = holo-[ACP] + adenosine 3',5'-bisphosphate + H(+)</text>
        <dbReference type="Rhea" id="RHEA:12068"/>
        <dbReference type="Rhea" id="RHEA-COMP:9685"/>
        <dbReference type="Rhea" id="RHEA-COMP:9690"/>
        <dbReference type="ChEBI" id="CHEBI:15378"/>
        <dbReference type="ChEBI" id="CHEBI:29999"/>
        <dbReference type="ChEBI" id="CHEBI:57287"/>
        <dbReference type="ChEBI" id="CHEBI:58343"/>
        <dbReference type="ChEBI" id="CHEBI:64479"/>
        <dbReference type="EC" id="2.7.8.7"/>
    </reaction>
</comment>
<comment type="cofactor">
    <cofactor evidence="1">
        <name>Mg(2+)</name>
        <dbReference type="ChEBI" id="CHEBI:18420"/>
    </cofactor>
</comment>
<comment type="subcellular location">
    <subcellularLocation>
        <location evidence="1">Cytoplasm</location>
    </subcellularLocation>
</comment>
<comment type="similarity">
    <text evidence="1">Belongs to the P-Pant transferase superfamily. AcpS family.</text>
</comment>
<sequence>MIIGIGSDLIDIRRIENSLQRFGERFVNRCFTDIEIAKSEGRKNRAASYAKRFAAKEACSKALGTGLAQGVFWKDMGVVNLPGGKPTMQLTGGAAARLQEMLPVGHRAAIHLTITDDFPLAQAFVIIEALPVAPAEGTV</sequence>
<accession>Q92R49</accession>
<name>ACPS_RHIME</name>
<evidence type="ECO:0000255" key="1">
    <source>
        <dbReference type="HAMAP-Rule" id="MF_00101"/>
    </source>
</evidence>
<organism>
    <name type="scientific">Rhizobium meliloti (strain 1021)</name>
    <name type="common">Ensifer meliloti</name>
    <name type="synonym">Sinorhizobium meliloti</name>
    <dbReference type="NCBI Taxonomy" id="266834"/>
    <lineage>
        <taxon>Bacteria</taxon>
        <taxon>Pseudomonadati</taxon>
        <taxon>Pseudomonadota</taxon>
        <taxon>Alphaproteobacteria</taxon>
        <taxon>Hyphomicrobiales</taxon>
        <taxon>Rhizobiaceae</taxon>
        <taxon>Sinorhizobium/Ensifer group</taxon>
        <taxon>Sinorhizobium</taxon>
    </lineage>
</organism>
<keyword id="KW-0963">Cytoplasm</keyword>
<keyword id="KW-0275">Fatty acid biosynthesis</keyword>
<keyword id="KW-0276">Fatty acid metabolism</keyword>
<keyword id="KW-0444">Lipid biosynthesis</keyword>
<keyword id="KW-0443">Lipid metabolism</keyword>
<keyword id="KW-0460">Magnesium</keyword>
<keyword id="KW-0479">Metal-binding</keyword>
<keyword id="KW-1185">Reference proteome</keyword>
<keyword id="KW-0808">Transferase</keyword>
<dbReference type="EC" id="2.7.8.7" evidence="1"/>
<dbReference type="EMBL" id="AL591688">
    <property type="protein sequence ID" value="CAC45649.1"/>
    <property type="molecule type" value="Genomic_DNA"/>
</dbReference>
<dbReference type="RefSeq" id="NP_385176.1">
    <property type="nucleotide sequence ID" value="NC_003047.1"/>
</dbReference>
<dbReference type="RefSeq" id="WP_010969020.1">
    <property type="nucleotide sequence ID" value="NC_003047.1"/>
</dbReference>
<dbReference type="SMR" id="Q92R49"/>
<dbReference type="EnsemblBacteria" id="CAC45649">
    <property type="protein sequence ID" value="CAC45649"/>
    <property type="gene ID" value="SMc02654"/>
</dbReference>
<dbReference type="GeneID" id="89575394"/>
<dbReference type="KEGG" id="sme:SMc02654"/>
<dbReference type="PATRIC" id="fig|266834.11.peg.2476"/>
<dbReference type="eggNOG" id="COG0736">
    <property type="taxonomic scope" value="Bacteria"/>
</dbReference>
<dbReference type="HOGENOM" id="CLU_089696_0_2_5"/>
<dbReference type="OrthoDB" id="517356at2"/>
<dbReference type="Proteomes" id="UP000001976">
    <property type="component" value="Chromosome"/>
</dbReference>
<dbReference type="GO" id="GO:0005737">
    <property type="term" value="C:cytoplasm"/>
    <property type="evidence" value="ECO:0007669"/>
    <property type="project" value="UniProtKB-SubCell"/>
</dbReference>
<dbReference type="GO" id="GO:0008897">
    <property type="term" value="F:holo-[acyl-carrier-protein] synthase activity"/>
    <property type="evidence" value="ECO:0007669"/>
    <property type="project" value="UniProtKB-UniRule"/>
</dbReference>
<dbReference type="GO" id="GO:0000287">
    <property type="term" value="F:magnesium ion binding"/>
    <property type="evidence" value="ECO:0007669"/>
    <property type="project" value="UniProtKB-UniRule"/>
</dbReference>
<dbReference type="GO" id="GO:0006633">
    <property type="term" value="P:fatty acid biosynthetic process"/>
    <property type="evidence" value="ECO:0007669"/>
    <property type="project" value="UniProtKB-UniRule"/>
</dbReference>
<dbReference type="Gene3D" id="3.90.470.20">
    <property type="entry name" value="4'-phosphopantetheinyl transferase domain"/>
    <property type="match status" value="1"/>
</dbReference>
<dbReference type="HAMAP" id="MF_00101">
    <property type="entry name" value="AcpS"/>
    <property type="match status" value="1"/>
</dbReference>
<dbReference type="InterPro" id="IPR008278">
    <property type="entry name" value="4-PPantetheinyl_Trfase_dom"/>
</dbReference>
<dbReference type="InterPro" id="IPR037143">
    <property type="entry name" value="4-PPantetheinyl_Trfase_dom_sf"/>
</dbReference>
<dbReference type="InterPro" id="IPR002582">
    <property type="entry name" value="ACPS"/>
</dbReference>
<dbReference type="InterPro" id="IPR004568">
    <property type="entry name" value="Ppantetheine-prot_Trfase_dom"/>
</dbReference>
<dbReference type="NCBIfam" id="TIGR00516">
    <property type="entry name" value="acpS"/>
    <property type="match status" value="1"/>
</dbReference>
<dbReference type="NCBIfam" id="TIGR00556">
    <property type="entry name" value="pantethn_trn"/>
    <property type="match status" value="1"/>
</dbReference>
<dbReference type="Pfam" id="PF01648">
    <property type="entry name" value="ACPS"/>
    <property type="match status" value="1"/>
</dbReference>
<dbReference type="SUPFAM" id="SSF56214">
    <property type="entry name" value="4'-phosphopantetheinyl transferase"/>
    <property type="match status" value="1"/>
</dbReference>
<gene>
    <name evidence="1" type="primary">acpS</name>
    <name type="ordered locus">R01070</name>
    <name type="ORF">SMc02654</name>
</gene>
<protein>
    <recommendedName>
        <fullName evidence="1">Holo-[acyl-carrier-protein] synthase</fullName>
        <shortName evidence="1">Holo-ACP synthase</shortName>
        <ecNumber evidence="1">2.7.8.7</ecNumber>
    </recommendedName>
    <alternativeName>
        <fullName evidence="1">4'-phosphopantetheinyl transferase AcpS</fullName>
    </alternativeName>
</protein>
<reference key="1">
    <citation type="journal article" date="2001" name="Proc. Natl. Acad. Sci. U.S.A.">
        <title>Analysis of the chromosome sequence of the legume symbiont Sinorhizobium meliloti strain 1021.</title>
        <authorList>
            <person name="Capela D."/>
            <person name="Barloy-Hubler F."/>
            <person name="Gouzy J."/>
            <person name="Bothe G."/>
            <person name="Ampe F."/>
            <person name="Batut J."/>
            <person name="Boistard P."/>
            <person name="Becker A."/>
            <person name="Boutry M."/>
            <person name="Cadieu E."/>
            <person name="Dreano S."/>
            <person name="Gloux S."/>
            <person name="Godrie T."/>
            <person name="Goffeau A."/>
            <person name="Kahn D."/>
            <person name="Kiss E."/>
            <person name="Lelaure V."/>
            <person name="Masuy D."/>
            <person name="Pohl T."/>
            <person name="Portetelle D."/>
            <person name="Puehler A."/>
            <person name="Purnelle B."/>
            <person name="Ramsperger U."/>
            <person name="Renard C."/>
            <person name="Thebault P."/>
            <person name="Vandenbol M."/>
            <person name="Weidner S."/>
            <person name="Galibert F."/>
        </authorList>
    </citation>
    <scope>NUCLEOTIDE SEQUENCE [LARGE SCALE GENOMIC DNA]</scope>
    <source>
        <strain>1021</strain>
    </source>
</reference>
<reference key="2">
    <citation type="journal article" date="2001" name="Science">
        <title>The composite genome of the legume symbiont Sinorhizobium meliloti.</title>
        <authorList>
            <person name="Galibert F."/>
            <person name="Finan T.M."/>
            <person name="Long S.R."/>
            <person name="Puehler A."/>
            <person name="Abola P."/>
            <person name="Ampe F."/>
            <person name="Barloy-Hubler F."/>
            <person name="Barnett M.J."/>
            <person name="Becker A."/>
            <person name="Boistard P."/>
            <person name="Bothe G."/>
            <person name="Boutry M."/>
            <person name="Bowser L."/>
            <person name="Buhrmester J."/>
            <person name="Cadieu E."/>
            <person name="Capela D."/>
            <person name="Chain P."/>
            <person name="Cowie A."/>
            <person name="Davis R.W."/>
            <person name="Dreano S."/>
            <person name="Federspiel N.A."/>
            <person name="Fisher R.F."/>
            <person name="Gloux S."/>
            <person name="Godrie T."/>
            <person name="Goffeau A."/>
            <person name="Golding B."/>
            <person name="Gouzy J."/>
            <person name="Gurjal M."/>
            <person name="Hernandez-Lucas I."/>
            <person name="Hong A."/>
            <person name="Huizar L."/>
            <person name="Hyman R.W."/>
            <person name="Jones T."/>
            <person name="Kahn D."/>
            <person name="Kahn M.L."/>
            <person name="Kalman S."/>
            <person name="Keating D.H."/>
            <person name="Kiss E."/>
            <person name="Komp C."/>
            <person name="Lelaure V."/>
            <person name="Masuy D."/>
            <person name="Palm C."/>
            <person name="Peck M.C."/>
            <person name="Pohl T.M."/>
            <person name="Portetelle D."/>
            <person name="Purnelle B."/>
            <person name="Ramsperger U."/>
            <person name="Surzycki R."/>
            <person name="Thebault P."/>
            <person name="Vandenbol M."/>
            <person name="Vorhoelter F.J."/>
            <person name="Weidner S."/>
            <person name="Wells D.H."/>
            <person name="Wong K."/>
            <person name="Yeh K.-C."/>
            <person name="Batut J."/>
        </authorList>
    </citation>
    <scope>NUCLEOTIDE SEQUENCE [LARGE SCALE GENOMIC DNA]</scope>
    <source>
        <strain>1021</strain>
    </source>
</reference>
<feature type="chain" id="PRO_0000175689" description="Holo-[acyl-carrier-protein] synthase">
    <location>
        <begin position="1"/>
        <end position="139"/>
    </location>
</feature>
<feature type="binding site" evidence="1">
    <location>
        <position position="8"/>
    </location>
    <ligand>
        <name>Mg(2+)</name>
        <dbReference type="ChEBI" id="CHEBI:18420"/>
    </ligand>
</feature>
<feature type="binding site" evidence="1">
    <location>
        <position position="57"/>
    </location>
    <ligand>
        <name>Mg(2+)</name>
        <dbReference type="ChEBI" id="CHEBI:18420"/>
    </ligand>
</feature>